<name>VE7_HPV63</name>
<protein>
    <recommendedName>
        <fullName evidence="1">Protein E7</fullName>
    </recommendedName>
</protein>
<proteinExistence type="inferred from homology"/>
<keyword id="KW-0010">Activator</keyword>
<keyword id="KW-0238">DNA-binding</keyword>
<keyword id="KW-0244">Early protein</keyword>
<keyword id="KW-1078">G1/S host cell cycle checkpoint dysregulation by virus</keyword>
<keyword id="KW-1035">Host cytoplasm</keyword>
<keyword id="KW-1048">Host nucleus</keyword>
<keyword id="KW-0945">Host-virus interaction</keyword>
<keyword id="KW-1090">Inhibition of host innate immune response by virus</keyword>
<keyword id="KW-1114">Inhibition of host interferon signaling pathway by virus</keyword>
<keyword id="KW-0922">Interferon antiviral system evasion</keyword>
<keyword id="KW-0479">Metal-binding</keyword>
<keyword id="KW-1121">Modulation of host cell cycle by virus</keyword>
<keyword id="KW-0553">Oncogene</keyword>
<keyword id="KW-1185">Reference proteome</keyword>
<keyword id="KW-0804">Transcription</keyword>
<keyword id="KW-0805">Transcription regulation</keyword>
<keyword id="KW-0899">Viral immunoevasion</keyword>
<keyword id="KW-0862">Zinc</keyword>
<keyword id="KW-0863">Zinc-finger</keyword>
<accession>Q07858</accession>
<comment type="function">
    <text evidence="1">Plays a role in viral genome replication by driving entry of quiescent cells into the cell cycle. Stimulation of progression from G1 to S phase allows the virus to efficiently use the cellular DNA replicating machinery to achieve viral genome replication. E7 protein has both transforming and trans-activating activities. Induces the disassembly of the E2F1 transcription factor from RB1, with subsequent transcriptional activation of E2F1-regulated S-phase genes. Interferes with host histone deacetylation mediated by HDAC1 and HDAC2, leading to transcription activation. Also plays a role in the inhibition of both antiviral and antiproliferative functions of host interferon alpha. Interaction with host TMEM173/STING impairs the ability of TMEM173/STING to sense cytosolic DNA and promote the production of type I interferon (IFN-alpha and IFN-beta).</text>
</comment>
<comment type="subunit">
    <text evidence="1">Homodimer. Homooligomer. Interacts with host RB1; this interaction induces dissociation of RB1-E2F1 complex thereby disrupting RB1 activity. Interacts with host EP300; this interaction represses EP300 transcriptional activity. Interacts with protein E2; this interaction inhibits E7 oncogenic activity. Interacts with host TMEM173/STING; this interaction impairs the ability of TMEM173/STING to sense cytosolic DNA and promote the production of type I interferon (IFN-alpha and IFN-beta).</text>
</comment>
<comment type="subcellular location">
    <subcellularLocation>
        <location evidence="1">Host cytoplasm</location>
    </subcellularLocation>
    <subcellularLocation>
        <location evidence="1">Host nucleus</location>
    </subcellularLocation>
    <text evidence="1">Predominantly found in the host nucleus.</text>
</comment>
<comment type="domain">
    <text evidence="1">The E7 terminal domain is an intrinsically disordered domain, whose flexibility and conformational transitions confer target adaptability to the oncoprotein. It allows adaptation to a variety of protein targets and exposes the PEST degradation sequence that regulates its turnover in the cell.</text>
</comment>
<comment type="PTM">
    <text evidence="1">Highly phosphorylated.</text>
</comment>
<comment type="similarity">
    <text evidence="1">Belongs to the papillomaviridae E7 protein family.</text>
</comment>
<reference key="1">
    <citation type="journal article" date="1993" name="Virology">
        <title>Two novel types of human papillomavirus, HPV 63 and HPV 65: comparisons of their clinical and histological features and DNA sequences to other HPV types.</title>
        <authorList>
            <person name="Egawa K."/>
            <person name="Delius H."/>
            <person name="Matsukura T."/>
            <person name="Kawashima M."/>
            <person name="de Villiers E.M."/>
        </authorList>
    </citation>
    <scope>NUCLEOTIDE SEQUENCE [GENOMIC DNA]</scope>
</reference>
<reference key="2">
    <citation type="journal article" date="2002" name="Rev. Med. Virol.">
        <title>Interactions of SV40 large T antigen and other viral proteins with retinoblastoma tumour suppressor.</title>
        <authorList>
            <person name="Lee C."/>
            <person name="Cho Y."/>
        </authorList>
    </citation>
    <scope>REVIEW</scope>
</reference>
<organism>
    <name type="scientific">Human papillomavirus type 63</name>
    <dbReference type="NCBI Taxonomy" id="28311"/>
    <lineage>
        <taxon>Viruses</taxon>
        <taxon>Monodnaviria</taxon>
        <taxon>Shotokuvirae</taxon>
        <taxon>Cossaviricota</taxon>
        <taxon>Papovaviricetes</taxon>
        <taxon>Zurhausenvirales</taxon>
        <taxon>Papillomaviridae</taxon>
        <taxon>Firstpapillomavirinae</taxon>
        <taxon>Mupapillomavirus</taxon>
        <taxon>Mupapillomavirus 2</taxon>
    </lineage>
</organism>
<evidence type="ECO:0000255" key="1">
    <source>
        <dbReference type="HAMAP-Rule" id="MF_04004"/>
    </source>
</evidence>
<gene>
    <name evidence="1" type="primary">E7</name>
</gene>
<sequence>MVGEQPNIGDLVSQEEPSVLDLNCYEDIPAEEEESEYPYAIVLPCGLCDQLLRLTCVSDLSTLTRLEELLLGSLRIVCPLCAIRHQRH</sequence>
<organismHost>
    <name type="scientific">Homo sapiens</name>
    <name type="common">Human</name>
    <dbReference type="NCBI Taxonomy" id="9606"/>
</organismHost>
<feature type="chain" id="PRO_0000133457" description="Protein E7">
    <location>
        <begin position="1"/>
        <end position="88"/>
    </location>
</feature>
<feature type="zinc finger region" evidence="1">
    <location>
        <begin position="45"/>
        <end position="81"/>
    </location>
</feature>
<feature type="region of interest" description="E7 terminal domain" evidence="1">
    <location>
        <begin position="1"/>
        <end position="37"/>
    </location>
</feature>
<feature type="short sequence motif" description="LXCXE motif; interaction with host RB1 and TMEM173/STING" evidence="1">
    <location>
        <begin position="22"/>
        <end position="26"/>
    </location>
</feature>
<feature type="short sequence motif" description="Nuclear export signal" evidence="1">
    <location>
        <begin position="63"/>
        <end position="71"/>
    </location>
</feature>
<dbReference type="EMBL" id="X70828">
    <property type="protein sequence ID" value="CAA50165.1"/>
    <property type="molecule type" value="Genomic_DNA"/>
</dbReference>
<dbReference type="RefSeq" id="NP_040897.1">
    <property type="nucleotide sequence ID" value="NC_001458.1"/>
</dbReference>
<dbReference type="SMR" id="Q07858"/>
<dbReference type="KEGG" id="vg:1494573"/>
<dbReference type="Proteomes" id="UP000007671">
    <property type="component" value="Segment"/>
</dbReference>
<dbReference type="GO" id="GO:0030430">
    <property type="term" value="C:host cell cytoplasm"/>
    <property type="evidence" value="ECO:0007669"/>
    <property type="project" value="UniProtKB-SubCell"/>
</dbReference>
<dbReference type="GO" id="GO:0042025">
    <property type="term" value="C:host cell nucleus"/>
    <property type="evidence" value="ECO:0007669"/>
    <property type="project" value="UniProtKB-SubCell"/>
</dbReference>
<dbReference type="GO" id="GO:0003677">
    <property type="term" value="F:DNA binding"/>
    <property type="evidence" value="ECO:0007669"/>
    <property type="project" value="UniProtKB-UniRule"/>
</dbReference>
<dbReference type="GO" id="GO:0003700">
    <property type="term" value="F:DNA-binding transcription factor activity"/>
    <property type="evidence" value="ECO:0007669"/>
    <property type="project" value="UniProtKB-UniRule"/>
</dbReference>
<dbReference type="GO" id="GO:0019904">
    <property type="term" value="F:protein domain specific binding"/>
    <property type="evidence" value="ECO:0007669"/>
    <property type="project" value="UniProtKB-UniRule"/>
</dbReference>
<dbReference type="GO" id="GO:0008270">
    <property type="term" value="F:zinc ion binding"/>
    <property type="evidence" value="ECO:0007669"/>
    <property type="project" value="UniProtKB-KW"/>
</dbReference>
<dbReference type="GO" id="GO:0006351">
    <property type="term" value="P:DNA-templated transcription"/>
    <property type="evidence" value="ECO:0007669"/>
    <property type="project" value="UniProtKB-UniRule"/>
</dbReference>
<dbReference type="GO" id="GO:0039645">
    <property type="term" value="P:symbiont-mediated perturbation of host cell cycle G1/S transition checkpoint"/>
    <property type="evidence" value="ECO:0007669"/>
    <property type="project" value="UniProtKB-UniRule"/>
</dbReference>
<dbReference type="GO" id="GO:0052170">
    <property type="term" value="P:symbiont-mediated suppression of host innate immune response"/>
    <property type="evidence" value="ECO:0007669"/>
    <property type="project" value="UniProtKB-KW"/>
</dbReference>
<dbReference type="GO" id="GO:0039502">
    <property type="term" value="P:symbiont-mediated suppression of host type I interferon-mediated signaling pathway"/>
    <property type="evidence" value="ECO:0007669"/>
    <property type="project" value="UniProtKB-UniRule"/>
</dbReference>
<dbReference type="Gene3D" id="3.30.160.330">
    <property type="match status" value="1"/>
</dbReference>
<dbReference type="HAMAP" id="MF_04004">
    <property type="entry name" value="PPV_E7"/>
    <property type="match status" value="1"/>
</dbReference>
<dbReference type="InterPro" id="IPR000148">
    <property type="entry name" value="Papilloma_E7"/>
</dbReference>
<dbReference type="Pfam" id="PF00527">
    <property type="entry name" value="E7"/>
    <property type="match status" value="1"/>
</dbReference>
<dbReference type="PIRSF" id="PIRSF003407">
    <property type="entry name" value="Papvi_E7"/>
    <property type="match status" value="1"/>
</dbReference>
<dbReference type="SUPFAM" id="SSF161234">
    <property type="entry name" value="E7 C-terminal domain-like"/>
    <property type="match status" value="1"/>
</dbReference>